<sequence length="185" mass="21579">MKDPIVKKTEEKMKKSVNSIDEELKKLRTGRPSPALLEEIKVDYYGVPTPINQVATVNVTEERSLIIKPWEKNLLNAVEKAIQASDLGLNPMNDGNVIRLVFPTPTTEQRQKWVKKAKDIVEHGKIAVRNIRREILKELKDLKKNGEISEDDERRLEKEIQNLTDKYVEELDKLFERKEKEIMEF</sequence>
<protein>
    <recommendedName>
        <fullName evidence="1">Ribosome-recycling factor</fullName>
        <shortName evidence="1">RRF</shortName>
    </recommendedName>
    <alternativeName>
        <fullName evidence="1">Ribosome-releasing factor</fullName>
    </alternativeName>
</protein>
<gene>
    <name evidence="1" type="primary">frr</name>
    <name type="ordered locus">Tmel_1278</name>
</gene>
<organism>
    <name type="scientific">Thermosipho melanesiensis (strain DSM 12029 / CIP 104789 / BI429)</name>
    <dbReference type="NCBI Taxonomy" id="391009"/>
    <lineage>
        <taxon>Bacteria</taxon>
        <taxon>Thermotogati</taxon>
        <taxon>Thermotogota</taxon>
        <taxon>Thermotogae</taxon>
        <taxon>Thermotogales</taxon>
        <taxon>Fervidobacteriaceae</taxon>
        <taxon>Thermosipho</taxon>
    </lineage>
</organism>
<comment type="function">
    <text evidence="1">Responsible for the release of ribosomes from messenger RNA at the termination of protein biosynthesis. May increase the efficiency of translation by recycling ribosomes from one round of translation to another.</text>
</comment>
<comment type="subcellular location">
    <subcellularLocation>
        <location evidence="1">Cytoplasm</location>
    </subcellularLocation>
</comment>
<comment type="similarity">
    <text evidence="1">Belongs to the RRF family.</text>
</comment>
<dbReference type="EMBL" id="CP000716">
    <property type="protein sequence ID" value="ABR31127.1"/>
    <property type="molecule type" value="Genomic_DNA"/>
</dbReference>
<dbReference type="RefSeq" id="WP_012057486.1">
    <property type="nucleotide sequence ID" value="NC_009616.1"/>
</dbReference>
<dbReference type="SMR" id="A6LMH6"/>
<dbReference type="STRING" id="391009.Tmel_1278"/>
<dbReference type="KEGG" id="tme:Tmel_1278"/>
<dbReference type="eggNOG" id="COG0233">
    <property type="taxonomic scope" value="Bacteria"/>
</dbReference>
<dbReference type="HOGENOM" id="CLU_073981_2_0_0"/>
<dbReference type="OrthoDB" id="9804006at2"/>
<dbReference type="Proteomes" id="UP000001110">
    <property type="component" value="Chromosome"/>
</dbReference>
<dbReference type="GO" id="GO:0005737">
    <property type="term" value="C:cytoplasm"/>
    <property type="evidence" value="ECO:0007669"/>
    <property type="project" value="UniProtKB-SubCell"/>
</dbReference>
<dbReference type="GO" id="GO:0043023">
    <property type="term" value="F:ribosomal large subunit binding"/>
    <property type="evidence" value="ECO:0007669"/>
    <property type="project" value="TreeGrafter"/>
</dbReference>
<dbReference type="GO" id="GO:0006415">
    <property type="term" value="P:translational termination"/>
    <property type="evidence" value="ECO:0007669"/>
    <property type="project" value="UniProtKB-UniRule"/>
</dbReference>
<dbReference type="CDD" id="cd00520">
    <property type="entry name" value="RRF"/>
    <property type="match status" value="1"/>
</dbReference>
<dbReference type="FunFam" id="1.10.132.20:FF:000001">
    <property type="entry name" value="Ribosome-recycling factor"/>
    <property type="match status" value="1"/>
</dbReference>
<dbReference type="FunFam" id="3.30.1360.40:FF:000001">
    <property type="entry name" value="Ribosome-recycling factor"/>
    <property type="match status" value="1"/>
</dbReference>
<dbReference type="Gene3D" id="3.30.1360.40">
    <property type="match status" value="1"/>
</dbReference>
<dbReference type="Gene3D" id="1.10.132.20">
    <property type="entry name" value="Ribosome-recycling factor"/>
    <property type="match status" value="1"/>
</dbReference>
<dbReference type="HAMAP" id="MF_00040">
    <property type="entry name" value="RRF"/>
    <property type="match status" value="1"/>
</dbReference>
<dbReference type="InterPro" id="IPR002661">
    <property type="entry name" value="Ribosome_recyc_fac"/>
</dbReference>
<dbReference type="InterPro" id="IPR023584">
    <property type="entry name" value="Ribosome_recyc_fac_dom"/>
</dbReference>
<dbReference type="InterPro" id="IPR036191">
    <property type="entry name" value="RRF_sf"/>
</dbReference>
<dbReference type="NCBIfam" id="TIGR00496">
    <property type="entry name" value="frr"/>
    <property type="match status" value="1"/>
</dbReference>
<dbReference type="PANTHER" id="PTHR20982:SF3">
    <property type="entry name" value="MITOCHONDRIAL RIBOSOME RECYCLING FACTOR PSEUDO 1"/>
    <property type="match status" value="1"/>
</dbReference>
<dbReference type="PANTHER" id="PTHR20982">
    <property type="entry name" value="RIBOSOME RECYCLING FACTOR"/>
    <property type="match status" value="1"/>
</dbReference>
<dbReference type="Pfam" id="PF01765">
    <property type="entry name" value="RRF"/>
    <property type="match status" value="1"/>
</dbReference>
<dbReference type="SUPFAM" id="SSF55194">
    <property type="entry name" value="Ribosome recycling factor, RRF"/>
    <property type="match status" value="1"/>
</dbReference>
<proteinExistence type="inferred from homology"/>
<reference key="1">
    <citation type="submission" date="2007-05" db="EMBL/GenBank/DDBJ databases">
        <title>Complete sequence of Thermosipho melanesiensis BI429.</title>
        <authorList>
            <consortium name="US DOE Joint Genome Institute"/>
            <person name="Copeland A."/>
            <person name="Lucas S."/>
            <person name="Lapidus A."/>
            <person name="Barry K."/>
            <person name="Glavina del Rio T."/>
            <person name="Dalin E."/>
            <person name="Tice H."/>
            <person name="Pitluck S."/>
            <person name="Chertkov O."/>
            <person name="Brettin T."/>
            <person name="Bruce D."/>
            <person name="Detter J.C."/>
            <person name="Han C."/>
            <person name="Schmutz J."/>
            <person name="Larimer F."/>
            <person name="Land M."/>
            <person name="Hauser L."/>
            <person name="Kyrpides N."/>
            <person name="Mikhailova N."/>
            <person name="Nelson K."/>
            <person name="Gogarten J.P."/>
            <person name="Noll K."/>
            <person name="Richardson P."/>
        </authorList>
    </citation>
    <scope>NUCLEOTIDE SEQUENCE [LARGE SCALE GENOMIC DNA]</scope>
    <source>
        <strain>DSM 12029 / CIP 104789 / BI429</strain>
    </source>
</reference>
<keyword id="KW-0963">Cytoplasm</keyword>
<keyword id="KW-0648">Protein biosynthesis</keyword>
<feature type="chain" id="PRO_1000003303" description="Ribosome-recycling factor">
    <location>
        <begin position="1"/>
        <end position="185"/>
    </location>
</feature>
<name>RRF_THEM4</name>
<accession>A6LMH6</accession>
<evidence type="ECO:0000255" key="1">
    <source>
        <dbReference type="HAMAP-Rule" id="MF_00040"/>
    </source>
</evidence>